<reference key="1">
    <citation type="journal article" date="2008" name="Genome Res.">
        <title>Genome sequence of the beta-rhizobium Cupriavidus taiwanensis and comparative genomics of rhizobia.</title>
        <authorList>
            <person name="Amadou C."/>
            <person name="Pascal G."/>
            <person name="Mangenot S."/>
            <person name="Glew M."/>
            <person name="Bontemps C."/>
            <person name="Capela D."/>
            <person name="Carrere S."/>
            <person name="Cruveiller S."/>
            <person name="Dossat C."/>
            <person name="Lajus A."/>
            <person name="Marchetti M."/>
            <person name="Poinsot V."/>
            <person name="Rouy Z."/>
            <person name="Servin B."/>
            <person name="Saad M."/>
            <person name="Schenowitz C."/>
            <person name="Barbe V."/>
            <person name="Batut J."/>
            <person name="Medigue C."/>
            <person name="Masson-Boivin C."/>
        </authorList>
    </citation>
    <scope>NUCLEOTIDE SEQUENCE [LARGE SCALE GENOMIC DNA]</scope>
    <source>
        <strain>DSM 17343 / BCRC 17206 / CCUG 44338 / CIP 107171 / LMG 19424 / R1</strain>
    </source>
</reference>
<feature type="chain" id="PRO_1000186877" description="Formate-dependent phosphoribosylglycinamide formyltransferase">
    <location>
        <begin position="1"/>
        <end position="401"/>
    </location>
</feature>
<feature type="domain" description="ATP-grasp" evidence="1">
    <location>
        <begin position="120"/>
        <end position="315"/>
    </location>
</feature>
<feature type="binding site" evidence="1">
    <location>
        <begin position="22"/>
        <end position="23"/>
    </location>
    <ligand>
        <name>N(1)-(5-phospho-beta-D-ribosyl)glycinamide</name>
        <dbReference type="ChEBI" id="CHEBI:143788"/>
    </ligand>
</feature>
<feature type="binding site" evidence="1">
    <location>
        <position position="82"/>
    </location>
    <ligand>
        <name>N(1)-(5-phospho-beta-D-ribosyl)glycinamide</name>
        <dbReference type="ChEBI" id="CHEBI:143788"/>
    </ligand>
</feature>
<feature type="binding site" evidence="1">
    <location>
        <position position="115"/>
    </location>
    <ligand>
        <name>ATP</name>
        <dbReference type="ChEBI" id="CHEBI:30616"/>
    </ligand>
</feature>
<feature type="binding site" evidence="1">
    <location>
        <position position="157"/>
    </location>
    <ligand>
        <name>ATP</name>
        <dbReference type="ChEBI" id="CHEBI:30616"/>
    </ligand>
</feature>
<feature type="binding site" evidence="1">
    <location>
        <begin position="162"/>
        <end position="167"/>
    </location>
    <ligand>
        <name>ATP</name>
        <dbReference type="ChEBI" id="CHEBI:30616"/>
    </ligand>
</feature>
<feature type="binding site" evidence="1">
    <location>
        <begin position="197"/>
        <end position="200"/>
    </location>
    <ligand>
        <name>ATP</name>
        <dbReference type="ChEBI" id="CHEBI:30616"/>
    </ligand>
</feature>
<feature type="binding site" evidence="1">
    <location>
        <position position="205"/>
    </location>
    <ligand>
        <name>ATP</name>
        <dbReference type="ChEBI" id="CHEBI:30616"/>
    </ligand>
</feature>
<feature type="binding site" evidence="1">
    <location>
        <position position="274"/>
    </location>
    <ligand>
        <name>Mg(2+)</name>
        <dbReference type="ChEBI" id="CHEBI:18420"/>
    </ligand>
</feature>
<feature type="binding site" evidence="1">
    <location>
        <position position="286"/>
    </location>
    <ligand>
        <name>Mg(2+)</name>
        <dbReference type="ChEBI" id="CHEBI:18420"/>
    </ligand>
</feature>
<feature type="binding site" evidence="1">
    <location>
        <position position="293"/>
    </location>
    <ligand>
        <name>N(1)-(5-phospho-beta-D-ribosyl)glycinamide</name>
        <dbReference type="ChEBI" id="CHEBI:143788"/>
    </ligand>
</feature>
<feature type="binding site" evidence="1">
    <location>
        <position position="362"/>
    </location>
    <ligand>
        <name>N(1)-(5-phospho-beta-D-ribosyl)glycinamide</name>
        <dbReference type="ChEBI" id="CHEBI:143788"/>
    </ligand>
</feature>
<feature type="binding site" evidence="1">
    <location>
        <begin position="369"/>
        <end position="370"/>
    </location>
    <ligand>
        <name>N(1)-(5-phospho-beta-D-ribosyl)glycinamide</name>
        <dbReference type="ChEBI" id="CHEBI:143788"/>
    </ligand>
</feature>
<sequence length="401" mass="42849">MTTLGTPLSPSATKVMLLGSGELGKEVLIALQRLGVETIAVDRYDNAPGQQVAHHARTIAMSDPDQLKALIEAEKPHLVVPEIEAIATPMLETLEAAGTVRVIPTARAARLTMDREGIRRLAAESLGLPTSPYKFCDSLEELQAAIDGGIGYPCVVKPVMSSSGKGQSKIDGPEGVKAAWDYAMAGGRVSHGRVIVEGFIDFDYEITLLTVRAIGASGQVETRFCAPIGHVQVSGDYVESWQPQPMHPAALASAQRIAQAVTADLGGMGLFGVELFVKGEQVWFSEVSPRPHDTGMVTMATQWQNEFELHARAILGLPVDTTLRSPGASAVIYGGVEAQGVVFDGVDQALRVPQTEVRLFGKPESFARRRMGVALAYADDIDTARTRAKEAASRVRPRAVG</sequence>
<gene>
    <name evidence="1" type="primary">purT</name>
    <name type="ordered locus">RALTA_A1591</name>
</gene>
<keyword id="KW-0067">ATP-binding</keyword>
<keyword id="KW-0436">Ligase</keyword>
<keyword id="KW-0460">Magnesium</keyword>
<keyword id="KW-0479">Metal-binding</keyword>
<keyword id="KW-0547">Nucleotide-binding</keyword>
<keyword id="KW-0658">Purine biosynthesis</keyword>
<proteinExistence type="inferred from homology"/>
<evidence type="ECO:0000255" key="1">
    <source>
        <dbReference type="HAMAP-Rule" id="MF_01643"/>
    </source>
</evidence>
<accession>B3R259</accession>
<organism>
    <name type="scientific">Cupriavidus taiwanensis (strain DSM 17343 / BCRC 17206 / CCUG 44338 / CIP 107171 / LMG 19424 / R1)</name>
    <name type="common">Ralstonia taiwanensis (strain LMG 19424)</name>
    <dbReference type="NCBI Taxonomy" id="977880"/>
    <lineage>
        <taxon>Bacteria</taxon>
        <taxon>Pseudomonadati</taxon>
        <taxon>Pseudomonadota</taxon>
        <taxon>Betaproteobacteria</taxon>
        <taxon>Burkholderiales</taxon>
        <taxon>Burkholderiaceae</taxon>
        <taxon>Cupriavidus</taxon>
    </lineage>
</organism>
<dbReference type="EC" id="6.3.1.21" evidence="1"/>
<dbReference type="EMBL" id="CU633749">
    <property type="protein sequence ID" value="CAQ69536.1"/>
    <property type="molecule type" value="Genomic_DNA"/>
</dbReference>
<dbReference type="RefSeq" id="WP_012352859.1">
    <property type="nucleotide sequence ID" value="NC_010528.1"/>
</dbReference>
<dbReference type="SMR" id="B3R259"/>
<dbReference type="GeneID" id="29760751"/>
<dbReference type="KEGG" id="cti:RALTA_A1591"/>
<dbReference type="eggNOG" id="COG0027">
    <property type="taxonomic scope" value="Bacteria"/>
</dbReference>
<dbReference type="HOGENOM" id="CLU_011534_1_3_4"/>
<dbReference type="BioCyc" id="CTAI977880:RALTA_RS07635-MONOMER"/>
<dbReference type="UniPathway" id="UPA00074">
    <property type="reaction ID" value="UER00127"/>
</dbReference>
<dbReference type="Proteomes" id="UP000001692">
    <property type="component" value="Chromosome 1"/>
</dbReference>
<dbReference type="GO" id="GO:0005829">
    <property type="term" value="C:cytosol"/>
    <property type="evidence" value="ECO:0007669"/>
    <property type="project" value="TreeGrafter"/>
</dbReference>
<dbReference type="GO" id="GO:0005524">
    <property type="term" value="F:ATP binding"/>
    <property type="evidence" value="ECO:0007669"/>
    <property type="project" value="UniProtKB-UniRule"/>
</dbReference>
<dbReference type="GO" id="GO:0000287">
    <property type="term" value="F:magnesium ion binding"/>
    <property type="evidence" value="ECO:0007669"/>
    <property type="project" value="InterPro"/>
</dbReference>
<dbReference type="GO" id="GO:0043815">
    <property type="term" value="F:phosphoribosylglycinamide formyltransferase 2 activity"/>
    <property type="evidence" value="ECO:0007669"/>
    <property type="project" value="UniProtKB-UniRule"/>
</dbReference>
<dbReference type="GO" id="GO:0004644">
    <property type="term" value="F:phosphoribosylglycinamide formyltransferase activity"/>
    <property type="evidence" value="ECO:0007669"/>
    <property type="project" value="InterPro"/>
</dbReference>
<dbReference type="GO" id="GO:0006189">
    <property type="term" value="P:'de novo' IMP biosynthetic process"/>
    <property type="evidence" value="ECO:0007669"/>
    <property type="project" value="UniProtKB-UniRule"/>
</dbReference>
<dbReference type="Gene3D" id="3.40.50.20">
    <property type="match status" value="1"/>
</dbReference>
<dbReference type="Gene3D" id="3.30.1490.20">
    <property type="entry name" value="ATP-grasp fold, A domain"/>
    <property type="match status" value="1"/>
</dbReference>
<dbReference type="Gene3D" id="3.30.470.20">
    <property type="entry name" value="ATP-grasp fold, B domain"/>
    <property type="match status" value="1"/>
</dbReference>
<dbReference type="HAMAP" id="MF_01643">
    <property type="entry name" value="PurT"/>
    <property type="match status" value="1"/>
</dbReference>
<dbReference type="InterPro" id="IPR011761">
    <property type="entry name" value="ATP-grasp"/>
</dbReference>
<dbReference type="InterPro" id="IPR003135">
    <property type="entry name" value="ATP-grasp_carboxylate-amine"/>
</dbReference>
<dbReference type="InterPro" id="IPR013815">
    <property type="entry name" value="ATP_grasp_subdomain_1"/>
</dbReference>
<dbReference type="InterPro" id="IPR016185">
    <property type="entry name" value="PreATP-grasp_dom_sf"/>
</dbReference>
<dbReference type="InterPro" id="IPR005862">
    <property type="entry name" value="PurT"/>
</dbReference>
<dbReference type="InterPro" id="IPR054350">
    <property type="entry name" value="PurT/PurK_preATP-grasp"/>
</dbReference>
<dbReference type="InterPro" id="IPR048740">
    <property type="entry name" value="PurT_C"/>
</dbReference>
<dbReference type="InterPro" id="IPR011054">
    <property type="entry name" value="Rudment_hybrid_motif"/>
</dbReference>
<dbReference type="NCBIfam" id="NF006766">
    <property type="entry name" value="PRK09288.1"/>
    <property type="match status" value="1"/>
</dbReference>
<dbReference type="NCBIfam" id="TIGR01142">
    <property type="entry name" value="purT"/>
    <property type="match status" value="1"/>
</dbReference>
<dbReference type="PANTHER" id="PTHR43055">
    <property type="entry name" value="FORMATE-DEPENDENT PHOSPHORIBOSYLGLYCINAMIDE FORMYLTRANSFERASE"/>
    <property type="match status" value="1"/>
</dbReference>
<dbReference type="PANTHER" id="PTHR43055:SF1">
    <property type="entry name" value="FORMATE-DEPENDENT PHOSPHORIBOSYLGLYCINAMIDE FORMYLTRANSFERASE"/>
    <property type="match status" value="1"/>
</dbReference>
<dbReference type="Pfam" id="PF02222">
    <property type="entry name" value="ATP-grasp"/>
    <property type="match status" value="1"/>
</dbReference>
<dbReference type="Pfam" id="PF21244">
    <property type="entry name" value="PurT_C"/>
    <property type="match status" value="1"/>
</dbReference>
<dbReference type="Pfam" id="PF22660">
    <property type="entry name" value="RS_preATP-grasp-like"/>
    <property type="match status" value="1"/>
</dbReference>
<dbReference type="SUPFAM" id="SSF56059">
    <property type="entry name" value="Glutathione synthetase ATP-binding domain-like"/>
    <property type="match status" value="1"/>
</dbReference>
<dbReference type="SUPFAM" id="SSF52440">
    <property type="entry name" value="PreATP-grasp domain"/>
    <property type="match status" value="1"/>
</dbReference>
<dbReference type="SUPFAM" id="SSF51246">
    <property type="entry name" value="Rudiment single hybrid motif"/>
    <property type="match status" value="1"/>
</dbReference>
<dbReference type="PROSITE" id="PS50975">
    <property type="entry name" value="ATP_GRASP"/>
    <property type="match status" value="1"/>
</dbReference>
<comment type="function">
    <text evidence="1">Involved in the de novo purine biosynthesis. Catalyzes the transfer of formate to 5-phospho-ribosyl-glycinamide (GAR), producing 5-phospho-ribosyl-N-formylglycinamide (FGAR). Formate is provided by PurU via hydrolysis of 10-formyl-tetrahydrofolate.</text>
</comment>
<comment type="catalytic activity">
    <reaction evidence="1">
        <text>N(1)-(5-phospho-beta-D-ribosyl)glycinamide + formate + ATP = N(2)-formyl-N(1)-(5-phospho-beta-D-ribosyl)glycinamide + ADP + phosphate + H(+)</text>
        <dbReference type="Rhea" id="RHEA:24829"/>
        <dbReference type="ChEBI" id="CHEBI:15378"/>
        <dbReference type="ChEBI" id="CHEBI:15740"/>
        <dbReference type="ChEBI" id="CHEBI:30616"/>
        <dbReference type="ChEBI" id="CHEBI:43474"/>
        <dbReference type="ChEBI" id="CHEBI:143788"/>
        <dbReference type="ChEBI" id="CHEBI:147286"/>
        <dbReference type="ChEBI" id="CHEBI:456216"/>
        <dbReference type="EC" id="6.3.1.21"/>
    </reaction>
    <physiologicalReaction direction="left-to-right" evidence="1">
        <dbReference type="Rhea" id="RHEA:24830"/>
    </physiologicalReaction>
</comment>
<comment type="pathway">
    <text evidence="1">Purine metabolism; IMP biosynthesis via de novo pathway; N(2)-formyl-N(1)-(5-phospho-D-ribosyl)glycinamide from N(1)-(5-phospho-D-ribosyl)glycinamide (formate route): step 1/1.</text>
</comment>
<comment type="subunit">
    <text evidence="1">Homodimer.</text>
</comment>
<comment type="similarity">
    <text evidence="1">Belongs to the PurK/PurT family.</text>
</comment>
<name>PURT_CUPTR</name>
<protein>
    <recommendedName>
        <fullName evidence="1">Formate-dependent phosphoribosylglycinamide formyltransferase</fullName>
        <ecNumber evidence="1">6.3.1.21</ecNumber>
    </recommendedName>
    <alternativeName>
        <fullName evidence="1">5'-phosphoribosylglycinamide transformylase 2</fullName>
    </alternativeName>
    <alternativeName>
        <fullName evidence="1">Formate-dependent GAR transformylase</fullName>
    </alternativeName>
    <alternativeName>
        <fullName evidence="1">GAR transformylase 2</fullName>
        <shortName evidence="1">GART 2</shortName>
    </alternativeName>
    <alternativeName>
        <fullName evidence="1">Non-folate glycinamide ribonucleotide transformylase</fullName>
    </alternativeName>
    <alternativeName>
        <fullName evidence="1">Phosphoribosylglycinamide formyltransferase 2</fullName>
    </alternativeName>
</protein>